<organism>
    <name type="scientific">Xanthomonas euvesicatoria pv. vesicatoria (strain 85-10)</name>
    <name type="common">Xanthomonas campestris pv. vesicatoria</name>
    <dbReference type="NCBI Taxonomy" id="316273"/>
    <lineage>
        <taxon>Bacteria</taxon>
        <taxon>Pseudomonadati</taxon>
        <taxon>Pseudomonadota</taxon>
        <taxon>Gammaproteobacteria</taxon>
        <taxon>Lysobacterales</taxon>
        <taxon>Lysobacteraceae</taxon>
        <taxon>Xanthomonas</taxon>
    </lineage>
</organism>
<accession>Q3BN06</accession>
<dbReference type="EC" id="1.1.1.25" evidence="1"/>
<dbReference type="EMBL" id="AM039952">
    <property type="protein sequence ID" value="CAJ25857.1"/>
    <property type="molecule type" value="Genomic_DNA"/>
</dbReference>
<dbReference type="RefSeq" id="WP_011348929.1">
    <property type="nucleotide sequence ID" value="NZ_CP017190.1"/>
</dbReference>
<dbReference type="SMR" id="Q3BN06"/>
<dbReference type="STRING" id="456327.BJD11_24785"/>
<dbReference type="GeneID" id="63993185"/>
<dbReference type="KEGG" id="xcv:XCV4126"/>
<dbReference type="eggNOG" id="COG0169">
    <property type="taxonomic scope" value="Bacteria"/>
</dbReference>
<dbReference type="HOGENOM" id="CLU_044063_2_1_6"/>
<dbReference type="UniPathway" id="UPA00053">
    <property type="reaction ID" value="UER00087"/>
</dbReference>
<dbReference type="Proteomes" id="UP000007069">
    <property type="component" value="Chromosome"/>
</dbReference>
<dbReference type="GO" id="GO:0005829">
    <property type="term" value="C:cytosol"/>
    <property type="evidence" value="ECO:0007669"/>
    <property type="project" value="TreeGrafter"/>
</dbReference>
<dbReference type="GO" id="GO:0050661">
    <property type="term" value="F:NADP binding"/>
    <property type="evidence" value="ECO:0007669"/>
    <property type="project" value="InterPro"/>
</dbReference>
<dbReference type="GO" id="GO:0004764">
    <property type="term" value="F:shikimate 3-dehydrogenase (NADP+) activity"/>
    <property type="evidence" value="ECO:0007669"/>
    <property type="project" value="UniProtKB-UniRule"/>
</dbReference>
<dbReference type="GO" id="GO:0008652">
    <property type="term" value="P:amino acid biosynthetic process"/>
    <property type="evidence" value="ECO:0007669"/>
    <property type="project" value="UniProtKB-KW"/>
</dbReference>
<dbReference type="GO" id="GO:0009073">
    <property type="term" value="P:aromatic amino acid family biosynthetic process"/>
    <property type="evidence" value="ECO:0007669"/>
    <property type="project" value="UniProtKB-KW"/>
</dbReference>
<dbReference type="GO" id="GO:0009423">
    <property type="term" value="P:chorismate biosynthetic process"/>
    <property type="evidence" value="ECO:0007669"/>
    <property type="project" value="UniProtKB-UniRule"/>
</dbReference>
<dbReference type="GO" id="GO:0019632">
    <property type="term" value="P:shikimate metabolic process"/>
    <property type="evidence" value="ECO:0007669"/>
    <property type="project" value="InterPro"/>
</dbReference>
<dbReference type="CDD" id="cd01065">
    <property type="entry name" value="NAD_bind_Shikimate_DH"/>
    <property type="match status" value="1"/>
</dbReference>
<dbReference type="FunFam" id="3.40.50.10860:FF:000006">
    <property type="entry name" value="Shikimate dehydrogenase (NADP(+))"/>
    <property type="match status" value="1"/>
</dbReference>
<dbReference type="Gene3D" id="3.40.50.10860">
    <property type="entry name" value="Leucine Dehydrogenase, chain A, domain 1"/>
    <property type="match status" value="1"/>
</dbReference>
<dbReference type="Gene3D" id="3.40.50.720">
    <property type="entry name" value="NAD(P)-binding Rossmann-like Domain"/>
    <property type="match status" value="1"/>
</dbReference>
<dbReference type="HAMAP" id="MF_00222">
    <property type="entry name" value="Shikimate_DH_AroE"/>
    <property type="match status" value="1"/>
</dbReference>
<dbReference type="InterPro" id="IPR046346">
    <property type="entry name" value="Aminoacid_DH-like_N_sf"/>
</dbReference>
<dbReference type="InterPro" id="IPR036291">
    <property type="entry name" value="NAD(P)-bd_dom_sf"/>
</dbReference>
<dbReference type="InterPro" id="IPR041121">
    <property type="entry name" value="SDH_C"/>
</dbReference>
<dbReference type="InterPro" id="IPR011342">
    <property type="entry name" value="Shikimate_DH"/>
</dbReference>
<dbReference type="InterPro" id="IPR013708">
    <property type="entry name" value="Shikimate_DH-bd_N"/>
</dbReference>
<dbReference type="InterPro" id="IPR022893">
    <property type="entry name" value="Shikimate_DH_fam"/>
</dbReference>
<dbReference type="InterPro" id="IPR006151">
    <property type="entry name" value="Shikm_DH/Glu-tRNA_Rdtase"/>
</dbReference>
<dbReference type="NCBIfam" id="TIGR00507">
    <property type="entry name" value="aroE"/>
    <property type="match status" value="1"/>
</dbReference>
<dbReference type="NCBIfam" id="NF001310">
    <property type="entry name" value="PRK00258.1-2"/>
    <property type="match status" value="1"/>
</dbReference>
<dbReference type="PANTHER" id="PTHR21089:SF1">
    <property type="entry name" value="BIFUNCTIONAL 3-DEHYDROQUINATE DEHYDRATASE_SHIKIMATE DEHYDROGENASE, CHLOROPLASTIC"/>
    <property type="match status" value="1"/>
</dbReference>
<dbReference type="PANTHER" id="PTHR21089">
    <property type="entry name" value="SHIKIMATE DEHYDROGENASE"/>
    <property type="match status" value="1"/>
</dbReference>
<dbReference type="Pfam" id="PF18317">
    <property type="entry name" value="SDH_C"/>
    <property type="match status" value="1"/>
</dbReference>
<dbReference type="Pfam" id="PF01488">
    <property type="entry name" value="Shikimate_DH"/>
    <property type="match status" value="1"/>
</dbReference>
<dbReference type="Pfam" id="PF08501">
    <property type="entry name" value="Shikimate_dh_N"/>
    <property type="match status" value="1"/>
</dbReference>
<dbReference type="SUPFAM" id="SSF53223">
    <property type="entry name" value="Aminoacid dehydrogenase-like, N-terminal domain"/>
    <property type="match status" value="1"/>
</dbReference>
<dbReference type="SUPFAM" id="SSF51735">
    <property type="entry name" value="NAD(P)-binding Rossmann-fold domains"/>
    <property type="match status" value="1"/>
</dbReference>
<evidence type="ECO:0000255" key="1">
    <source>
        <dbReference type="HAMAP-Rule" id="MF_00222"/>
    </source>
</evidence>
<protein>
    <recommendedName>
        <fullName evidence="1">Shikimate dehydrogenase (NADP(+))</fullName>
        <shortName evidence="1">SDH</shortName>
        <ecNumber evidence="1">1.1.1.25</ecNumber>
    </recommendedName>
</protein>
<reference key="1">
    <citation type="journal article" date="2005" name="J. Bacteriol.">
        <title>Insights into genome plasticity and pathogenicity of the plant pathogenic Bacterium Xanthomonas campestris pv. vesicatoria revealed by the complete genome sequence.</title>
        <authorList>
            <person name="Thieme F."/>
            <person name="Koebnik R."/>
            <person name="Bekel T."/>
            <person name="Berger C."/>
            <person name="Boch J."/>
            <person name="Buettner D."/>
            <person name="Caldana C."/>
            <person name="Gaigalat L."/>
            <person name="Goesmann A."/>
            <person name="Kay S."/>
            <person name="Kirchner O."/>
            <person name="Lanz C."/>
            <person name="Linke B."/>
            <person name="McHardy A.C."/>
            <person name="Meyer F."/>
            <person name="Mittenhuber G."/>
            <person name="Nies D.H."/>
            <person name="Niesbach-Kloesgen U."/>
            <person name="Patschkowski T."/>
            <person name="Rueckert C."/>
            <person name="Rupp O."/>
            <person name="Schneiker S."/>
            <person name="Schuster S.C."/>
            <person name="Vorhoelter F.J."/>
            <person name="Weber E."/>
            <person name="Puehler A."/>
            <person name="Bonas U."/>
            <person name="Bartels D."/>
            <person name="Kaiser O."/>
        </authorList>
    </citation>
    <scope>NUCLEOTIDE SEQUENCE [LARGE SCALE GENOMIC DNA]</scope>
    <source>
        <strain>85-10</strain>
    </source>
</reference>
<feature type="chain" id="PRO_1000021361" description="Shikimate dehydrogenase (NADP(+))">
    <location>
        <begin position="1"/>
        <end position="283"/>
    </location>
</feature>
<feature type="active site" description="Proton acceptor" evidence="1">
    <location>
        <position position="67"/>
    </location>
</feature>
<feature type="binding site" evidence="1">
    <location>
        <begin position="16"/>
        <end position="18"/>
    </location>
    <ligand>
        <name>shikimate</name>
        <dbReference type="ChEBI" id="CHEBI:36208"/>
    </ligand>
</feature>
<feature type="binding site" evidence="1">
    <location>
        <position position="63"/>
    </location>
    <ligand>
        <name>shikimate</name>
        <dbReference type="ChEBI" id="CHEBI:36208"/>
    </ligand>
</feature>
<feature type="binding site" evidence="1">
    <location>
        <position position="79"/>
    </location>
    <ligand>
        <name>NADP(+)</name>
        <dbReference type="ChEBI" id="CHEBI:58349"/>
    </ligand>
</feature>
<feature type="binding site" evidence="1">
    <location>
        <position position="88"/>
    </location>
    <ligand>
        <name>shikimate</name>
        <dbReference type="ChEBI" id="CHEBI:36208"/>
    </ligand>
</feature>
<feature type="binding site" evidence="1">
    <location>
        <position position="103"/>
    </location>
    <ligand>
        <name>shikimate</name>
        <dbReference type="ChEBI" id="CHEBI:36208"/>
    </ligand>
</feature>
<feature type="binding site" evidence="1">
    <location>
        <begin position="128"/>
        <end position="132"/>
    </location>
    <ligand>
        <name>NADP(+)</name>
        <dbReference type="ChEBI" id="CHEBI:58349"/>
    </ligand>
</feature>
<feature type="binding site" evidence="1">
    <location>
        <position position="243"/>
    </location>
    <ligand>
        <name>NADP(+)</name>
        <dbReference type="ChEBI" id="CHEBI:58349"/>
    </ligand>
</feature>
<gene>
    <name evidence="1" type="primary">aroE</name>
    <name type="ordered locus">XCV4126</name>
</gene>
<sequence>MPVSRYAVFGHPVAHSLSPAIHTEFGKQTGIALDYTAIDAPLEDFSAALQRFADEGGKGANVTLPLKEAAYALASSLSDRARLAGAVNTLVRNDGQWQGDNTDGAGLVRDLTERQGLDLRGRRVLLLGAGGAARGVAPALLEAGITAMVVVNRSPERADALCDALGEPARVTSRYIEDLRELGDFELIVNATAAGRDRDAGAFALPLGLVNSLTAAVDLNYGDTAIAFLAWARAAQCRYAIDGLGMLVEQAAESFALWHGVRPDTDPVYAALRAREAVLVSAD</sequence>
<keyword id="KW-0028">Amino-acid biosynthesis</keyword>
<keyword id="KW-0057">Aromatic amino acid biosynthesis</keyword>
<keyword id="KW-0521">NADP</keyword>
<keyword id="KW-0560">Oxidoreductase</keyword>
<comment type="function">
    <text evidence="1">Involved in the biosynthesis of the chorismate, which leads to the biosynthesis of aromatic amino acids. Catalyzes the reversible NADPH linked reduction of 3-dehydroshikimate (DHSA) to yield shikimate (SA).</text>
</comment>
<comment type="catalytic activity">
    <reaction evidence="1">
        <text>shikimate + NADP(+) = 3-dehydroshikimate + NADPH + H(+)</text>
        <dbReference type="Rhea" id="RHEA:17737"/>
        <dbReference type="ChEBI" id="CHEBI:15378"/>
        <dbReference type="ChEBI" id="CHEBI:16630"/>
        <dbReference type="ChEBI" id="CHEBI:36208"/>
        <dbReference type="ChEBI" id="CHEBI:57783"/>
        <dbReference type="ChEBI" id="CHEBI:58349"/>
        <dbReference type="EC" id="1.1.1.25"/>
    </reaction>
</comment>
<comment type="pathway">
    <text evidence="1">Metabolic intermediate biosynthesis; chorismate biosynthesis; chorismate from D-erythrose 4-phosphate and phosphoenolpyruvate: step 4/7.</text>
</comment>
<comment type="subunit">
    <text evidence="1">Homodimer.</text>
</comment>
<comment type="similarity">
    <text evidence="1">Belongs to the shikimate dehydrogenase family.</text>
</comment>
<name>AROE_XANE5</name>
<proteinExistence type="inferred from homology"/>